<feature type="chain" id="PRO_0000427207" description="Uncharacterized glycosyl hydrolase MT3509">
    <location>
        <begin position="1"/>
        <end position="786"/>
    </location>
</feature>
<feature type="region of interest" description="Disordered" evidence="2">
    <location>
        <begin position="762"/>
        <end position="786"/>
    </location>
</feature>
<feature type="compositionally biased region" description="Pro residues" evidence="2">
    <location>
        <begin position="766"/>
        <end position="776"/>
    </location>
</feature>
<feature type="active site" description="Proton donor" evidence="1">
    <location>
        <position position="488"/>
    </location>
</feature>
<feature type="binding site" evidence="1">
    <location>
        <begin position="361"/>
        <end position="362"/>
    </location>
    <ligand>
        <name>substrate</name>
    </ligand>
</feature>
<feature type="binding site" evidence="1">
    <location>
        <begin position="590"/>
        <end position="591"/>
    </location>
    <ligand>
        <name>substrate</name>
    </ligand>
</feature>
<keyword id="KW-0326">Glycosidase</keyword>
<keyword id="KW-0378">Hydrolase</keyword>
<keyword id="KW-1185">Reference proteome</keyword>
<evidence type="ECO:0000250" key="1">
    <source>
        <dbReference type="UniProtKB" id="D6XZ22"/>
    </source>
</evidence>
<evidence type="ECO:0000256" key="2">
    <source>
        <dbReference type="SAM" id="MobiDB-lite"/>
    </source>
</evidence>
<evidence type="ECO:0000305" key="3"/>
<protein>
    <recommendedName>
        <fullName>Uncharacterized glycosyl hydrolase MT3509</fullName>
        <ecNumber>3.2.1.-</ecNumber>
    </recommendedName>
</protein>
<organism>
    <name type="scientific">Mycobacterium tuberculosis (strain CDC 1551 / Oshkosh)</name>
    <dbReference type="NCBI Taxonomy" id="83331"/>
    <lineage>
        <taxon>Bacteria</taxon>
        <taxon>Bacillati</taxon>
        <taxon>Actinomycetota</taxon>
        <taxon>Actinomycetes</taxon>
        <taxon>Mycobacteriales</taxon>
        <taxon>Mycobacteriaceae</taxon>
        <taxon>Mycobacterium</taxon>
        <taxon>Mycobacterium tuberculosis complex</taxon>
    </lineage>
</organism>
<accession>P9WN12</accession>
<accession>L0TCF3</accession>
<accession>Q50724</accession>
<reference key="1">
    <citation type="journal article" date="2002" name="J. Bacteriol.">
        <title>Whole-genome comparison of Mycobacterium tuberculosis clinical and laboratory strains.</title>
        <authorList>
            <person name="Fleischmann R.D."/>
            <person name="Alland D."/>
            <person name="Eisen J.A."/>
            <person name="Carpenter L."/>
            <person name="White O."/>
            <person name="Peterson J.D."/>
            <person name="DeBoy R.T."/>
            <person name="Dodson R.J."/>
            <person name="Gwinn M.L."/>
            <person name="Haft D.H."/>
            <person name="Hickey E.K."/>
            <person name="Kolonay J.F."/>
            <person name="Nelson W.C."/>
            <person name="Umayam L.A."/>
            <person name="Ermolaeva M.D."/>
            <person name="Salzberg S.L."/>
            <person name="Delcher A."/>
            <person name="Utterback T.R."/>
            <person name="Weidman J.F."/>
            <person name="Khouri H.M."/>
            <person name="Gill J."/>
            <person name="Mikula A."/>
            <person name="Bishai W."/>
            <person name="Jacobs W.R. Jr."/>
            <person name="Venter J.C."/>
            <person name="Fraser C.M."/>
        </authorList>
    </citation>
    <scope>NUCLEOTIDE SEQUENCE [LARGE SCALE GENOMIC DNA]</scope>
    <source>
        <strain>CDC 1551 / Oshkosh</strain>
    </source>
</reference>
<dbReference type="EC" id="3.2.1.-"/>
<dbReference type="EMBL" id="AE000516">
    <property type="protein sequence ID" value="AAK47846.1"/>
    <property type="molecule type" value="Genomic_DNA"/>
</dbReference>
<dbReference type="PIR" id="F70735">
    <property type="entry name" value="F70735"/>
</dbReference>
<dbReference type="RefSeq" id="WP_003900047.1">
    <property type="nucleotide sequence ID" value="NZ_KK341227.1"/>
</dbReference>
<dbReference type="SMR" id="P9WN12"/>
<dbReference type="CAZy" id="GH65">
    <property type="family name" value="Glycoside Hydrolase Family 65"/>
</dbReference>
<dbReference type="KEGG" id="mtc:MT3509"/>
<dbReference type="PATRIC" id="fig|83331.31.peg.3766"/>
<dbReference type="HOGENOM" id="CLU_006285_2_2_11"/>
<dbReference type="Proteomes" id="UP000001020">
    <property type="component" value="Chromosome"/>
</dbReference>
<dbReference type="GO" id="GO:0030246">
    <property type="term" value="F:carbohydrate binding"/>
    <property type="evidence" value="ECO:0007669"/>
    <property type="project" value="InterPro"/>
</dbReference>
<dbReference type="GO" id="GO:0016757">
    <property type="term" value="F:glycosyltransferase activity"/>
    <property type="evidence" value="ECO:0007669"/>
    <property type="project" value="UniProtKB-ARBA"/>
</dbReference>
<dbReference type="GO" id="GO:0004553">
    <property type="term" value="F:hydrolase activity, hydrolyzing O-glycosyl compounds"/>
    <property type="evidence" value="ECO:0007669"/>
    <property type="project" value="TreeGrafter"/>
</dbReference>
<dbReference type="GO" id="GO:0005975">
    <property type="term" value="P:carbohydrate metabolic process"/>
    <property type="evidence" value="ECO:0007669"/>
    <property type="project" value="InterPro"/>
</dbReference>
<dbReference type="FunFam" id="1.50.10.10:FF:000029">
    <property type="entry name" value="Family 65 glycosyl hydrolase"/>
    <property type="match status" value="1"/>
</dbReference>
<dbReference type="FunFam" id="2.70.98.40:FF:000001">
    <property type="entry name" value="Family 65 glycosyl hydrolase"/>
    <property type="match status" value="1"/>
</dbReference>
<dbReference type="Gene3D" id="1.50.10.10">
    <property type="match status" value="1"/>
</dbReference>
<dbReference type="Gene3D" id="2.70.98.40">
    <property type="entry name" value="Glycoside hydrolase, family 65, N-terminal domain"/>
    <property type="match status" value="1"/>
</dbReference>
<dbReference type="Gene3D" id="2.60.420.10">
    <property type="entry name" value="Maltose phosphorylase, domain 3"/>
    <property type="match status" value="1"/>
</dbReference>
<dbReference type="InterPro" id="IPR008928">
    <property type="entry name" value="6-hairpin_glycosidase_sf"/>
</dbReference>
<dbReference type="InterPro" id="IPR012341">
    <property type="entry name" value="6hp_glycosidase-like_sf"/>
</dbReference>
<dbReference type="InterPro" id="IPR011013">
    <property type="entry name" value="Gal_mutarotase_sf_dom"/>
</dbReference>
<dbReference type="InterPro" id="IPR005194">
    <property type="entry name" value="Glyco_hydro_65_C"/>
</dbReference>
<dbReference type="InterPro" id="IPR005195">
    <property type="entry name" value="Glyco_hydro_65_M"/>
</dbReference>
<dbReference type="InterPro" id="IPR005196">
    <property type="entry name" value="Glyco_hydro_65_N"/>
</dbReference>
<dbReference type="InterPro" id="IPR037018">
    <property type="entry name" value="Glyco_hydro_65_N_sf"/>
</dbReference>
<dbReference type="InterPro" id="IPR017045">
    <property type="entry name" value="Malt_Pase/Glycosyl_Hdrlase"/>
</dbReference>
<dbReference type="PANTHER" id="PTHR11051">
    <property type="entry name" value="GLYCOSYL HYDROLASE-RELATED"/>
    <property type="match status" value="1"/>
</dbReference>
<dbReference type="PANTHER" id="PTHR11051:SF13">
    <property type="entry name" value="GLYCOSYL TRANSFERASE"/>
    <property type="match status" value="1"/>
</dbReference>
<dbReference type="Pfam" id="PF03633">
    <property type="entry name" value="Glyco_hydro_65C"/>
    <property type="match status" value="1"/>
</dbReference>
<dbReference type="Pfam" id="PF03632">
    <property type="entry name" value="Glyco_hydro_65m"/>
    <property type="match status" value="1"/>
</dbReference>
<dbReference type="Pfam" id="PF03636">
    <property type="entry name" value="Glyco_hydro_65N"/>
    <property type="match status" value="1"/>
</dbReference>
<dbReference type="PIRSF" id="PIRSF036289">
    <property type="entry name" value="Glycosyl_hydrolase_malt_phosph"/>
    <property type="match status" value="1"/>
</dbReference>
<dbReference type="SUPFAM" id="SSF74650">
    <property type="entry name" value="Galactose mutarotase-like"/>
    <property type="match status" value="1"/>
</dbReference>
<dbReference type="SUPFAM" id="SSF48208">
    <property type="entry name" value="Six-hairpin glycosidases"/>
    <property type="match status" value="1"/>
</dbReference>
<gene>
    <name type="ordered locus">MT3509</name>
</gene>
<sequence length="786" mass="87316">MITEDAFPVEPWQVRETKLNLNLLAQSESLFALSNGHIGLRGNLDEGEPFGLPGTYLNSFYEIRPLPYAEAGYGYPEAGQTVVDVTNGKIFRLLVGDEPFDVRYGELISHERILDLRAGTLTRRAHWRSPAGKQVKVTSTRLVSLAHRSVAAIEYVVEAIEEFVRVTVQSELVTNEDVPETSADPRVSAILDRPLQAVEHERTERGALLMHRTRASALMMAAGMEHEVEVPGRVEITTDARPDLARTTVICGLRPGQKLRIVKYLAYGWSSLRSRPALRDQAAGALHGARYSGWQGLLDAQRAYLDDFWDSADVEVEGDPECQQAVRFGLFHLLQASARAERRAIPSKGLTGTGYDGHAFWDTEGFVLPVLTYTAPHAVADALRWRASTLDLAKERAAELGLEGAAFPWRTIRGQESSAYWPAGTAAWHINADIAMAFERYRIVTGDGSLEEECGLAVLIETARLWLSLGHHDRHGVWHLDGVTGPDEYTAVVRDNVFTNLMAAHNLHTAADACLRHPEAAEAMGVTTEEMAAWRDAADAANIPYDEELGVHQQCEGFTTLAEWDFEANTTYPLLLHEAYVRLYPAQVIKQADLVLAMQWQSHAFTPEQKARNVDYYERRMVRDSSLSACTQAVMCAEVGHLELAHDYAYEAALIDLRDLHRNTRDGLHMASLAGAWTALVVGFGGLRDDEGILSIDPQLPDGISRLRFRLRWRGFRLIVDANHTDVTFILGDGPGTQLTMRHAGQDLTLHTDTPSTIAVRTRKPLLPPPPQPPGREPVHRRALAR</sequence>
<name>Y3401_MYCTO</name>
<proteinExistence type="inferred from homology"/>
<comment type="similarity">
    <text evidence="3">Belongs to the glycosyl hydrolase 65 family.</text>
</comment>